<protein>
    <recommendedName>
        <fullName evidence="1">Phosphate acyltransferase</fullName>
        <ecNumber evidence="1">2.3.1.274</ecNumber>
    </recommendedName>
    <alternativeName>
        <fullName evidence="1">Acyl-ACP phosphotransacylase</fullName>
    </alternativeName>
    <alternativeName>
        <fullName evidence="1">Acyl-[acyl-carrier-protein]--phosphate acyltransferase</fullName>
    </alternativeName>
    <alternativeName>
        <fullName evidence="1">Phosphate-acyl-ACP acyltransferase</fullName>
    </alternativeName>
</protein>
<proteinExistence type="inferred from homology"/>
<comment type="function">
    <text evidence="1">Catalyzes the reversible formation of acyl-phosphate (acyl-PO(4)) from acyl-[acyl-carrier-protein] (acyl-ACP). This enzyme utilizes acyl-ACP as fatty acyl donor, but not acyl-CoA.</text>
</comment>
<comment type="catalytic activity">
    <reaction evidence="1">
        <text>a fatty acyl-[ACP] + phosphate = an acyl phosphate + holo-[ACP]</text>
        <dbReference type="Rhea" id="RHEA:42292"/>
        <dbReference type="Rhea" id="RHEA-COMP:9685"/>
        <dbReference type="Rhea" id="RHEA-COMP:14125"/>
        <dbReference type="ChEBI" id="CHEBI:43474"/>
        <dbReference type="ChEBI" id="CHEBI:59918"/>
        <dbReference type="ChEBI" id="CHEBI:64479"/>
        <dbReference type="ChEBI" id="CHEBI:138651"/>
        <dbReference type="EC" id="2.3.1.274"/>
    </reaction>
</comment>
<comment type="pathway">
    <text evidence="1">Lipid metabolism; phospholipid metabolism.</text>
</comment>
<comment type="subunit">
    <text evidence="1">Homodimer. Probably interacts with PlsY.</text>
</comment>
<comment type="subcellular location">
    <subcellularLocation>
        <location evidence="1">Cytoplasm</location>
    </subcellularLocation>
    <text evidence="1">Associated with the membrane possibly through PlsY.</text>
</comment>
<comment type="similarity">
    <text evidence="1">Belongs to the PlsX family.</text>
</comment>
<comment type="sequence caution" evidence="2">
    <conflict type="erroneous initiation">
        <sequence resource="EMBL-CDS" id="ABB66563"/>
    </conflict>
</comment>
<accession>Q31ZE5</accession>
<sequence length="356" mass="38196">MTRLTLALDVMGGDFGPSVTVPAALQALNSNSQLTLLLVGNPDAITPLLAKADSEQRSRLQIIPAQSVIASDARPSQAIRASRGSSMRMALELVKEGRAQACVSAGNTGALMGLAKLLLKPLEGIERPALVTVLPHQQKGKTVVLDLGANVDCDSTMLVQFAIMGSVLAEEVVEIPNPRVALLNIGEEEVKGLDSIRDASAVLKTIPSINYIGYLEANELLTGKTDVLVCDGFTGNVTLKTMEGVVRMFLSLLKSQGEGKKRSWWLLLLKRWLQKSLTRRFSHLNPDQYNGACLLGLRGTVIKSHGAANQRAFAVAIEQAVQAVQRQVPQRIAARLESVYPAGFELLDGGKSGTLR</sequence>
<evidence type="ECO:0000255" key="1">
    <source>
        <dbReference type="HAMAP-Rule" id="MF_00019"/>
    </source>
</evidence>
<evidence type="ECO:0000305" key="2"/>
<name>PLSX_SHIBS</name>
<feature type="chain" id="PRO_0000329263" description="Phosphate acyltransferase">
    <location>
        <begin position="1"/>
        <end position="356"/>
    </location>
</feature>
<gene>
    <name evidence="1" type="primary">plsX</name>
    <name type="ordered locus">SBO_1973</name>
</gene>
<reference key="1">
    <citation type="journal article" date="2005" name="Nucleic Acids Res.">
        <title>Genome dynamics and diversity of Shigella species, the etiologic agents of bacillary dysentery.</title>
        <authorList>
            <person name="Yang F."/>
            <person name="Yang J."/>
            <person name="Zhang X."/>
            <person name="Chen L."/>
            <person name="Jiang Y."/>
            <person name="Yan Y."/>
            <person name="Tang X."/>
            <person name="Wang J."/>
            <person name="Xiong Z."/>
            <person name="Dong J."/>
            <person name="Xue Y."/>
            <person name="Zhu Y."/>
            <person name="Xu X."/>
            <person name="Sun L."/>
            <person name="Chen S."/>
            <person name="Nie H."/>
            <person name="Peng J."/>
            <person name="Xu J."/>
            <person name="Wang Y."/>
            <person name="Yuan Z."/>
            <person name="Wen Y."/>
            <person name="Yao Z."/>
            <person name="Shen Y."/>
            <person name="Qiang B."/>
            <person name="Hou Y."/>
            <person name="Yu J."/>
            <person name="Jin Q."/>
        </authorList>
    </citation>
    <scope>NUCLEOTIDE SEQUENCE [LARGE SCALE GENOMIC DNA]</scope>
    <source>
        <strain>Sb227</strain>
    </source>
</reference>
<dbReference type="EC" id="2.3.1.274" evidence="1"/>
<dbReference type="EMBL" id="CP000036">
    <property type="protein sequence ID" value="ABB66563.1"/>
    <property type="status" value="ALT_INIT"/>
    <property type="molecule type" value="Genomic_DNA"/>
</dbReference>
<dbReference type="RefSeq" id="WP_000197594.1">
    <property type="nucleotide sequence ID" value="NC_007613.1"/>
</dbReference>
<dbReference type="SMR" id="Q31ZE5"/>
<dbReference type="KEGG" id="sbo:SBO_1973"/>
<dbReference type="HOGENOM" id="CLU_039379_1_0_6"/>
<dbReference type="UniPathway" id="UPA00085"/>
<dbReference type="Proteomes" id="UP000007067">
    <property type="component" value="Chromosome"/>
</dbReference>
<dbReference type="GO" id="GO:0005737">
    <property type="term" value="C:cytoplasm"/>
    <property type="evidence" value="ECO:0007669"/>
    <property type="project" value="UniProtKB-SubCell"/>
</dbReference>
<dbReference type="GO" id="GO:0043811">
    <property type="term" value="F:phosphate:acyl-[acyl carrier protein] acyltransferase activity"/>
    <property type="evidence" value="ECO:0007669"/>
    <property type="project" value="UniProtKB-UniRule"/>
</dbReference>
<dbReference type="GO" id="GO:0006633">
    <property type="term" value="P:fatty acid biosynthetic process"/>
    <property type="evidence" value="ECO:0007669"/>
    <property type="project" value="UniProtKB-UniRule"/>
</dbReference>
<dbReference type="GO" id="GO:0008654">
    <property type="term" value="P:phospholipid biosynthetic process"/>
    <property type="evidence" value="ECO:0007669"/>
    <property type="project" value="UniProtKB-KW"/>
</dbReference>
<dbReference type="FunFam" id="3.40.718.10:FF:000008">
    <property type="entry name" value="Phosphate acyltransferase"/>
    <property type="match status" value="1"/>
</dbReference>
<dbReference type="Gene3D" id="3.40.718.10">
    <property type="entry name" value="Isopropylmalate Dehydrogenase"/>
    <property type="match status" value="1"/>
</dbReference>
<dbReference type="HAMAP" id="MF_00019">
    <property type="entry name" value="PlsX"/>
    <property type="match status" value="1"/>
</dbReference>
<dbReference type="InterPro" id="IPR003664">
    <property type="entry name" value="FA_synthesis"/>
</dbReference>
<dbReference type="InterPro" id="IPR012281">
    <property type="entry name" value="Phospholipid_synth_PlsX-like"/>
</dbReference>
<dbReference type="NCBIfam" id="TIGR00182">
    <property type="entry name" value="plsX"/>
    <property type="match status" value="1"/>
</dbReference>
<dbReference type="PANTHER" id="PTHR30100">
    <property type="entry name" value="FATTY ACID/PHOSPHOLIPID SYNTHESIS PROTEIN PLSX"/>
    <property type="match status" value="1"/>
</dbReference>
<dbReference type="PANTHER" id="PTHR30100:SF1">
    <property type="entry name" value="PHOSPHATE ACYLTRANSFERASE"/>
    <property type="match status" value="1"/>
</dbReference>
<dbReference type="Pfam" id="PF02504">
    <property type="entry name" value="FA_synthesis"/>
    <property type="match status" value="1"/>
</dbReference>
<dbReference type="PIRSF" id="PIRSF002465">
    <property type="entry name" value="Phsphlp_syn_PlsX"/>
    <property type="match status" value="1"/>
</dbReference>
<dbReference type="SUPFAM" id="SSF53659">
    <property type="entry name" value="Isocitrate/Isopropylmalate dehydrogenase-like"/>
    <property type="match status" value="1"/>
</dbReference>
<keyword id="KW-0963">Cytoplasm</keyword>
<keyword id="KW-0444">Lipid biosynthesis</keyword>
<keyword id="KW-0443">Lipid metabolism</keyword>
<keyword id="KW-0594">Phospholipid biosynthesis</keyword>
<keyword id="KW-1208">Phospholipid metabolism</keyword>
<keyword id="KW-0808">Transferase</keyword>
<organism>
    <name type="scientific">Shigella boydii serotype 4 (strain Sb227)</name>
    <dbReference type="NCBI Taxonomy" id="300268"/>
    <lineage>
        <taxon>Bacteria</taxon>
        <taxon>Pseudomonadati</taxon>
        <taxon>Pseudomonadota</taxon>
        <taxon>Gammaproteobacteria</taxon>
        <taxon>Enterobacterales</taxon>
        <taxon>Enterobacteriaceae</taxon>
        <taxon>Shigella</taxon>
    </lineage>
</organism>